<sequence>MDPHVKLSTSLVIIAFRYLPNNFNDSRLGCDNLSTVGLCLKNGTGEVLFSGLIKQMANFYIFPLLLEARSDHFYEGNEYIKYLSHRIHGLRKSLHITQRGGKPKSSVDKRYAEILLFNADRAFQQFVFLRSSQRRHALRRLKRADQFGKELVSFTNAFDCNDHIFYLEAIAFAKYIEGTLNYEKRDWEGSLSAFSISRLSFLVLQNKIDTLAEHEKSVLGELQNQIDSNLRYVAQRTGLQNQTKSLDILMLSSIPKDEEVIQHVNSVDSEILQMTGDEQDSLQTITVIEWRDQRVKIEHPDVVLALYAIHDVKNSPGTIDSKRDRLLAAWARAEEITKSVLDNTGLEDEQKFQTLSICYTYLAYNVVLLRIQRDLAVENDSELVASQAQLRSRQSLYDSIIKNIEIAKELPGIARDTGMTAQLEAQISLAKSKRCQAIADAYQAQDKLASLAMCVRAASYLQQVNDILRNFEEKPHLIAFDIIPELKKDEKELKKKILLLQSLASMGNINQPPKNLSLVETLDSYQTLAELEPSWNLTDADIRAIPAKPLFFDLAITYLGQQTSFDKKKAQPEKPVTSVSKEPKQKNKGFFSSLLGR</sequence>
<reference key="1">
    <citation type="journal article" date="2002" name="Nature">
        <title>The genome sequence of Schizosaccharomyces pombe.</title>
        <authorList>
            <person name="Wood V."/>
            <person name="Gwilliam R."/>
            <person name="Rajandream M.A."/>
            <person name="Lyne M.H."/>
            <person name="Lyne R."/>
            <person name="Stewart A."/>
            <person name="Sgouros J.G."/>
            <person name="Peat N."/>
            <person name="Hayles J."/>
            <person name="Baker S.G."/>
            <person name="Basham D."/>
            <person name="Bowman S."/>
            <person name="Brooks K."/>
            <person name="Brown D."/>
            <person name="Brown S."/>
            <person name="Chillingworth T."/>
            <person name="Churcher C.M."/>
            <person name="Collins M."/>
            <person name="Connor R."/>
            <person name="Cronin A."/>
            <person name="Davis P."/>
            <person name="Feltwell T."/>
            <person name="Fraser A."/>
            <person name="Gentles S."/>
            <person name="Goble A."/>
            <person name="Hamlin N."/>
            <person name="Harris D.E."/>
            <person name="Hidalgo J."/>
            <person name="Hodgson G."/>
            <person name="Holroyd S."/>
            <person name="Hornsby T."/>
            <person name="Howarth S."/>
            <person name="Huckle E.J."/>
            <person name="Hunt S."/>
            <person name="Jagels K."/>
            <person name="James K.D."/>
            <person name="Jones L."/>
            <person name="Jones M."/>
            <person name="Leather S."/>
            <person name="McDonald S."/>
            <person name="McLean J."/>
            <person name="Mooney P."/>
            <person name="Moule S."/>
            <person name="Mungall K.L."/>
            <person name="Murphy L.D."/>
            <person name="Niblett D."/>
            <person name="Odell C."/>
            <person name="Oliver K."/>
            <person name="O'Neil S."/>
            <person name="Pearson D."/>
            <person name="Quail M.A."/>
            <person name="Rabbinowitsch E."/>
            <person name="Rutherford K.M."/>
            <person name="Rutter S."/>
            <person name="Saunders D."/>
            <person name="Seeger K."/>
            <person name="Sharp S."/>
            <person name="Skelton J."/>
            <person name="Simmonds M.N."/>
            <person name="Squares R."/>
            <person name="Squares S."/>
            <person name="Stevens K."/>
            <person name="Taylor K."/>
            <person name="Taylor R.G."/>
            <person name="Tivey A."/>
            <person name="Walsh S.V."/>
            <person name="Warren T."/>
            <person name="Whitehead S."/>
            <person name="Woodward J.R."/>
            <person name="Volckaert G."/>
            <person name="Aert R."/>
            <person name="Robben J."/>
            <person name="Grymonprez B."/>
            <person name="Weltjens I."/>
            <person name="Vanstreels E."/>
            <person name="Rieger M."/>
            <person name="Schaefer M."/>
            <person name="Mueller-Auer S."/>
            <person name="Gabel C."/>
            <person name="Fuchs M."/>
            <person name="Duesterhoeft A."/>
            <person name="Fritzc C."/>
            <person name="Holzer E."/>
            <person name="Moestl D."/>
            <person name="Hilbert H."/>
            <person name="Borzym K."/>
            <person name="Langer I."/>
            <person name="Beck A."/>
            <person name="Lehrach H."/>
            <person name="Reinhardt R."/>
            <person name="Pohl T.M."/>
            <person name="Eger P."/>
            <person name="Zimmermann W."/>
            <person name="Wedler H."/>
            <person name="Wambutt R."/>
            <person name="Purnelle B."/>
            <person name="Goffeau A."/>
            <person name="Cadieu E."/>
            <person name="Dreano S."/>
            <person name="Gloux S."/>
            <person name="Lelaure V."/>
            <person name="Mottier S."/>
            <person name="Galibert F."/>
            <person name="Aves S.J."/>
            <person name="Xiang Z."/>
            <person name="Hunt C."/>
            <person name="Moore K."/>
            <person name="Hurst S.M."/>
            <person name="Lucas M."/>
            <person name="Rochet M."/>
            <person name="Gaillardin C."/>
            <person name="Tallada V.A."/>
            <person name="Garzon A."/>
            <person name="Thode G."/>
            <person name="Daga R.R."/>
            <person name="Cruzado L."/>
            <person name="Jimenez J."/>
            <person name="Sanchez M."/>
            <person name="del Rey F."/>
            <person name="Benito J."/>
            <person name="Dominguez A."/>
            <person name="Revuelta J.L."/>
            <person name="Moreno S."/>
            <person name="Armstrong J."/>
            <person name="Forsburg S.L."/>
            <person name="Cerutti L."/>
            <person name="Lowe T."/>
            <person name="McCombie W.R."/>
            <person name="Paulsen I."/>
            <person name="Potashkin J."/>
            <person name="Shpakovski G.V."/>
            <person name="Ussery D."/>
            <person name="Barrell B.G."/>
            <person name="Nurse P."/>
        </authorList>
    </citation>
    <scope>NUCLEOTIDE SEQUENCE [LARGE SCALE GENOMIC DNA]</scope>
    <source>
        <strain>972 / ATCC 24843</strain>
    </source>
</reference>
<reference key="2">
    <citation type="journal article" date="2006" name="Nat. Biotechnol.">
        <title>ORFeome cloning and global analysis of protein localization in the fission yeast Schizosaccharomyces pombe.</title>
        <authorList>
            <person name="Matsuyama A."/>
            <person name="Arai R."/>
            <person name="Yashiroda Y."/>
            <person name="Shirai A."/>
            <person name="Kamata A."/>
            <person name="Sekido S."/>
            <person name="Kobayashi Y."/>
            <person name="Hashimoto A."/>
            <person name="Hamamoto M."/>
            <person name="Hiraoka Y."/>
            <person name="Horinouchi S."/>
            <person name="Yoshida M."/>
        </authorList>
    </citation>
    <scope>SUBCELLULAR LOCATION [LARGE SCALE ANALYSIS]</scope>
</reference>
<evidence type="ECO:0000250" key="1">
    <source>
        <dbReference type="UniProtKB" id="P38687"/>
    </source>
</evidence>
<evidence type="ECO:0000250" key="2">
    <source>
        <dbReference type="UniProtKB" id="Q00004"/>
    </source>
</evidence>
<evidence type="ECO:0000250" key="3">
    <source>
        <dbReference type="UniProtKB" id="Q9UHB9"/>
    </source>
</evidence>
<evidence type="ECO:0000256" key="4">
    <source>
        <dbReference type="SAM" id="MobiDB-lite"/>
    </source>
</evidence>
<evidence type="ECO:0000269" key="5">
    <source>
    </source>
</evidence>
<evidence type="ECO:0000305" key="6"/>
<name>SRP68_SCHPO</name>
<feature type="chain" id="PRO_0000351070" description="Signal recognition particle subunit srp68">
    <location>
        <begin position="1"/>
        <end position="597"/>
    </location>
</feature>
<feature type="region of interest" description="Disordered" evidence="4">
    <location>
        <begin position="566"/>
        <end position="597"/>
    </location>
</feature>
<organism>
    <name type="scientific">Schizosaccharomyces pombe (strain 972 / ATCC 24843)</name>
    <name type="common">Fission yeast</name>
    <dbReference type="NCBI Taxonomy" id="284812"/>
    <lineage>
        <taxon>Eukaryota</taxon>
        <taxon>Fungi</taxon>
        <taxon>Dikarya</taxon>
        <taxon>Ascomycota</taxon>
        <taxon>Taphrinomycotina</taxon>
        <taxon>Schizosaccharomycetes</taxon>
        <taxon>Schizosaccharomycetales</taxon>
        <taxon>Schizosaccharomycetaceae</taxon>
        <taxon>Schizosaccharomyces</taxon>
    </lineage>
</organism>
<proteinExistence type="inferred from homology"/>
<comment type="function">
    <text evidence="1 3">Component of the signal recognition particle (SRP) complex, a ribonucleoprotein complex that mediates the cotranslational targeting of secretory and membrane proteins to the endoplasmic reticulum (ER) (By similarity). The SRP complex interacts with the signal sequence in nascent secretory and membrane proteins and directs them to the membrane of the ER (By similarity). The SRP complex targets the ribosome-nascent chain complex to the SRP receptor (SR), which is anchored in the ER, where SR compaction and GTPase rearrangement drive cotranslational protein translocation into the ER (By similarity). Binds the 7SL RNA, srp72 binds to this complex subsequently (By similarity). The SRP complex possibly participates in the elongation arrest function (By similarity).</text>
</comment>
<comment type="subunit">
    <text evidence="1 2 3">Heterodimer with srp72 (By similarity). Srp68-srp72 heterodimer formation is stabilized by the presence of 7SL RNA (By similarity). Component of a fungal signal recognition particle (SRP) complex that consists of a 7SL RNA molecule (scR1) and at least six protein subunits: srp72, srp68, srp54, sec65, srp21 and srp14 (By similarity).</text>
</comment>
<comment type="subcellular location">
    <subcellularLocation>
        <location evidence="5">Cytoplasm</location>
    </subcellularLocation>
    <subcellularLocation>
        <location evidence="1">Nucleus</location>
        <location evidence="1">Nucleolus</location>
    </subcellularLocation>
</comment>
<comment type="similarity">
    <text evidence="6">Belongs to the SRP68 family.</text>
</comment>
<dbReference type="EMBL" id="CU329672">
    <property type="protein sequence ID" value="CAA20671.1"/>
    <property type="molecule type" value="Genomic_DNA"/>
</dbReference>
<dbReference type="PIR" id="T41062">
    <property type="entry name" value="T41062"/>
</dbReference>
<dbReference type="RefSeq" id="NP_587798.1">
    <property type="nucleotide sequence ID" value="NM_001022791.2"/>
</dbReference>
<dbReference type="SMR" id="O74436"/>
<dbReference type="BioGRID" id="275956">
    <property type="interactions" value="3"/>
</dbReference>
<dbReference type="FunCoup" id="O74436">
    <property type="interactions" value="744"/>
</dbReference>
<dbReference type="STRING" id="284812.O74436"/>
<dbReference type="PaxDb" id="4896-SPCC1682.05c.1"/>
<dbReference type="EnsemblFungi" id="SPCC1682.05c.1">
    <property type="protein sequence ID" value="SPCC1682.05c.1:pep"/>
    <property type="gene ID" value="SPCC1682.05c"/>
</dbReference>
<dbReference type="PomBase" id="SPCC1682.05c">
    <property type="gene designation" value="srp68"/>
</dbReference>
<dbReference type="VEuPathDB" id="FungiDB:SPCC1682.05c"/>
<dbReference type="eggNOG" id="KOG2460">
    <property type="taxonomic scope" value="Eukaryota"/>
</dbReference>
<dbReference type="HOGENOM" id="CLU_018649_0_1_1"/>
<dbReference type="InParanoid" id="O74436"/>
<dbReference type="OMA" id="FFCETRI"/>
<dbReference type="PhylomeDB" id="O74436"/>
<dbReference type="Reactome" id="R-SPO-1799339">
    <property type="pathway name" value="SRP-dependent cotranslational protein targeting to membrane"/>
</dbReference>
<dbReference type="PRO" id="PR:O74436"/>
<dbReference type="Proteomes" id="UP000002485">
    <property type="component" value="Chromosome III"/>
</dbReference>
<dbReference type="GO" id="GO:0005829">
    <property type="term" value="C:cytosol"/>
    <property type="evidence" value="ECO:0007005"/>
    <property type="project" value="PomBase"/>
</dbReference>
<dbReference type="GO" id="GO:0005730">
    <property type="term" value="C:nucleolus"/>
    <property type="evidence" value="ECO:0007669"/>
    <property type="project" value="UniProtKB-SubCell"/>
</dbReference>
<dbReference type="GO" id="GO:0005786">
    <property type="term" value="C:signal recognition particle, endoplasmic reticulum targeting"/>
    <property type="evidence" value="ECO:0000318"/>
    <property type="project" value="GO_Central"/>
</dbReference>
<dbReference type="GO" id="GO:0008312">
    <property type="term" value="F:7S RNA binding"/>
    <property type="evidence" value="ECO:0007669"/>
    <property type="project" value="InterPro"/>
</dbReference>
<dbReference type="GO" id="GO:0030942">
    <property type="term" value="F:endoplasmic reticulum signal peptide binding"/>
    <property type="evidence" value="ECO:0007669"/>
    <property type="project" value="InterPro"/>
</dbReference>
<dbReference type="GO" id="GO:0005047">
    <property type="term" value="F:signal recognition particle binding"/>
    <property type="evidence" value="ECO:0000318"/>
    <property type="project" value="GO_Central"/>
</dbReference>
<dbReference type="GO" id="GO:0006886">
    <property type="term" value="P:intracellular protein transport"/>
    <property type="evidence" value="ECO:0000303"/>
    <property type="project" value="PomBase"/>
</dbReference>
<dbReference type="GO" id="GO:0006614">
    <property type="term" value="P:SRP-dependent cotranslational protein targeting to membrane"/>
    <property type="evidence" value="ECO:0000318"/>
    <property type="project" value="GO_Central"/>
</dbReference>
<dbReference type="GO" id="GO:0006617">
    <property type="term" value="P:SRP-dependent cotranslational protein targeting to membrane, signal sequence recognition"/>
    <property type="evidence" value="ECO:0000266"/>
    <property type="project" value="PomBase"/>
</dbReference>
<dbReference type="Gene3D" id="1.10.3450.40">
    <property type="entry name" value="Signal recognition particle, SRP68 subunit, RNA-binding domain"/>
    <property type="match status" value="1"/>
</dbReference>
<dbReference type="InterPro" id="IPR026258">
    <property type="entry name" value="SRP68"/>
</dbReference>
<dbReference type="InterPro" id="IPR038253">
    <property type="entry name" value="SRP68_N_sf"/>
</dbReference>
<dbReference type="PANTHER" id="PTHR12860">
    <property type="entry name" value="SIGNAL RECOGNITION PARTICLE 68 KDA PROTEIN"/>
    <property type="match status" value="1"/>
</dbReference>
<dbReference type="PANTHER" id="PTHR12860:SF0">
    <property type="entry name" value="SIGNAL RECOGNITION PARTICLE SUBUNIT SRP68"/>
    <property type="match status" value="1"/>
</dbReference>
<dbReference type="Pfam" id="PF16969">
    <property type="entry name" value="SRP68"/>
    <property type="match status" value="1"/>
</dbReference>
<dbReference type="PIRSF" id="PIRSF038995">
    <property type="entry name" value="SRP68"/>
    <property type="match status" value="1"/>
</dbReference>
<protein>
    <recommendedName>
        <fullName>Signal recognition particle subunit srp68</fullName>
    </recommendedName>
    <alternativeName>
        <fullName>Signal recognition particle 68 kDa protein homolog</fullName>
    </alternativeName>
</protein>
<accession>O74436</accession>
<keyword id="KW-0963">Cytoplasm</keyword>
<keyword id="KW-0539">Nucleus</keyword>
<keyword id="KW-1185">Reference proteome</keyword>
<keyword id="KW-0687">Ribonucleoprotein</keyword>
<keyword id="KW-0694">RNA-binding</keyword>
<keyword id="KW-0733">Signal recognition particle</keyword>
<gene>
    <name type="primary">srp68</name>
    <name type="ORF">SPCC1682.05c</name>
</gene>